<name>SEM5C_DROME</name>
<accession>Q9VTT0</accession>
<accession>Q7YU67</accession>
<accession>Q9U631</accession>
<gene>
    <name evidence="12 19" type="primary">Sema5c</name>
    <name evidence="19" type="synonym">DSema 3a</name>
    <name evidence="13" type="synonym">DSema 5C</name>
    <name evidence="17" type="synonym">sema 5c</name>
    <name evidence="17" type="synonym">Sema-3a</name>
    <name evidence="14" type="synonym">Sema-5c</name>
    <name evidence="19" type="ORF">CG5661</name>
</gene>
<comment type="function">
    <text evidence="1 9 10 11">Regulates the motility of migrating epithelial cells by providing guidance cues within the migratory environment and may also play a role in development of the olfactory system (PubMed:17435226, PubMed:30827914). May act as a positive axonal guidance cue (By similarity). Function in neurons is essential for adult survival and is important for climbing behavior (PubMed:37041188). Promotes collective migration of follicular epithelial cells in egg chambers, likely by acting at the leading edge of the basal epithelium cells to provide guidance cues across the cell boundary to the trailing edge of the cell ahead (PubMed:30827914). The transmembrane receptor PlexA on the trailing edge of the cell ahead, appears to transduce this signal to suppress the formation of protrusions (PubMed:30827914). Involved in olfactory avoidance behavior (PubMed:17435226).</text>
</comment>
<comment type="subcellular location">
    <subcellularLocation>
        <location evidence="10">Apical cell membrane</location>
        <topology evidence="2">Single-pass membrane protein</topology>
    </subcellularLocation>
    <subcellularLocation>
        <location evidence="10">Lateral cell membrane</location>
        <topology evidence="2">Single-pass membrane protein</topology>
    </subcellularLocation>
    <subcellularLocation>
        <location evidence="10">Endosome</location>
    </subcellularLocation>
    <text evidence="10">In egg chambers, detected on the apical and lateral membranes of the epithelium, and detected in intracellular puncta that may represent endosomes (PubMed:30827914). Punctate and planar polarized at the basal epithelial surface, with enrichment at each cell's leading edge (PubMed:30827914).</text>
</comment>
<comment type="alternative products">
    <event type="alternative splicing"/>
    <isoform>
        <id>Q9VTT0-1</id>
        <name evidence="19">A</name>
        <sequence type="displayed"/>
    </isoform>
    <isoform>
        <id>Q9VTT0-2</id>
        <name evidence="19">B</name>
        <sequence type="described" ref="VSP_062013"/>
    </isoform>
</comment>
<comment type="tissue specificity">
    <text evidence="10">In egg chambers, high levels of expression in the follicle cells, with little to no expression in the germ cells (at protein level) (PubMed:30827914). In stage 3 to 7 egg chambers, planar polarized at the basal epithelial surface (at protein level) (PubMed:30827914).</text>
</comment>
<comment type="developmental stage">
    <text evidence="7 8 9">At stage 11 embryos, expressed in mesodermal precursor cells from the dorsal tracheal pits to the ventral midline of each hemisegment (at protein level) (PubMed:11458392). At stage 12, expressed in fat body cell clusters (protein level) (PubMed:11458392). In stage 16 embryos, expressed at the attachment sites of segment border muscles (SBMs) and ventrolateral muscles (VLs) (at protein level) (PubMed:11458392). Expressed throughout development (PubMed:10704872). At the embryonic blastoderm stage, expressed in six stripes, of which the anterior three stripes show higher levels of expression than the posterior three stripes (PubMed:10704872). In addition, dorsal lateral extensions of the stripes occur (PubMed:10704872). At embryonic stages 7-9, expressed at relatively high levels in the ventral and dorsal regions and detected in the gut primordia (PubMed:11458392). During germband extension, detected at a lower level of expression as 12 stripes and is also expressed in the region of the amnioserosa (PubMed:10704872). At stages 9-11, the highest levels of expression occurs in 11 segmentally mesodermal patches and the gut primordia (PubMed:10704872, PubMed:11458392). In stage 11 embryos, expressed in fat body clusters and the gut primordia (PubMed:11458392). At late stages of embryogenesis, displays strong expression at muscle attachment sites, the visceral mesoderm of the anterior most part of the midgut, and in the dorsal vessel (PubMed:10704872, PubMed:11458392). In the brain of third instar larvae, expressed in the optic lobes, in the thoracic ganglion, in the midline glia, and in dispersed cells of the brain (PubMed:17435226).</text>
</comment>
<comment type="disruption phenotype">
    <text evidence="8 9 11">Adults display a slight decrease in olfactory avoidance behavior towards the repellent odorant benzaldehyde (PubMed:17435226). Also, the ellipsoid body in the brains of many mutants are decreased in size (PubMed:17435226). No visible effects on development and mutants are viable (PubMed:11458392). RNAi-mediated knockdown in the neurons of adult males significantly reduces survival to 37 percent (PubMed:37041188). Adult survival begins to decrease from approximately day 9 post eclosion (PubMed:37041188). Pan-neuronal or glutamatergic neuron-specific RNAi-mediated knockdown decreases adult climbing behavior (PubMed:37041188).</text>
</comment>
<comment type="similarity">
    <text evidence="15">Belongs to the semaphorin family.</text>
</comment>
<comment type="sequence caution" evidence="15">
    <conflict type="erroneous initiation">
        <sequence resource="EMBL-CDS" id="AAF04860"/>
    </conflict>
    <text>Truncated N-terminus.</text>
</comment>
<organism evidence="20">
    <name type="scientific">Drosophila melanogaster</name>
    <name type="common">Fruit fly</name>
    <dbReference type="NCBI Taxonomy" id="7227"/>
    <lineage>
        <taxon>Eukaryota</taxon>
        <taxon>Metazoa</taxon>
        <taxon>Ecdysozoa</taxon>
        <taxon>Arthropoda</taxon>
        <taxon>Hexapoda</taxon>
        <taxon>Insecta</taxon>
        <taxon>Pterygota</taxon>
        <taxon>Neoptera</taxon>
        <taxon>Endopterygota</taxon>
        <taxon>Diptera</taxon>
        <taxon>Brachycera</taxon>
        <taxon>Muscomorpha</taxon>
        <taxon>Ephydroidea</taxon>
        <taxon>Drosophilidae</taxon>
        <taxon>Drosophila</taxon>
        <taxon>Sophophora</taxon>
    </lineage>
</organism>
<protein>
    <recommendedName>
        <fullName evidence="12">Semaphorin 5c</fullName>
    </recommendedName>
</protein>
<feature type="signal peptide" evidence="2">
    <location>
        <begin position="1"/>
        <end position="34"/>
    </location>
</feature>
<feature type="chain" id="PRO_5004336132" description="Semaphorin 5c" evidence="2">
    <location>
        <begin position="35"/>
        <end position="1093"/>
    </location>
</feature>
<feature type="transmembrane region" description="Helical" evidence="2">
    <location>
        <begin position="960"/>
        <end position="980"/>
    </location>
</feature>
<feature type="domain" description="Sema" evidence="4">
    <location>
        <begin position="50"/>
        <end position="495"/>
    </location>
</feature>
<feature type="domain" description="PSI" evidence="2">
    <location>
        <begin position="497"/>
        <end position="546"/>
    </location>
</feature>
<feature type="domain" description="TSP type-1 1" evidence="3">
    <location>
        <begin position="553"/>
        <end position="605"/>
    </location>
</feature>
<feature type="domain" description="TSP type-1 2" evidence="3">
    <location>
        <begin position="607"/>
        <end position="663"/>
    </location>
</feature>
<feature type="domain" description="TSP type-1 3" evidence="3">
    <location>
        <begin position="671"/>
        <end position="726"/>
    </location>
</feature>
<feature type="domain" description="TSP type-1 4" evidence="3">
    <location>
        <begin position="794"/>
        <end position="834"/>
    </location>
</feature>
<feature type="domain" description="TSP type-1 5" evidence="3">
    <location>
        <begin position="850"/>
        <end position="901"/>
    </location>
</feature>
<feature type="domain" description="TSP type-1 6" evidence="3">
    <location>
        <begin position="904"/>
        <end position="953"/>
    </location>
</feature>
<feature type="region of interest" description="Disordered" evidence="6">
    <location>
        <begin position="1018"/>
        <end position="1056"/>
    </location>
</feature>
<feature type="compositionally biased region" description="Low complexity" evidence="6">
    <location>
        <begin position="1041"/>
        <end position="1053"/>
    </location>
</feature>
<feature type="glycosylation site" description="N-linked (GlcNAc...) asparagine" evidence="5">
    <location>
        <position position="48"/>
    </location>
</feature>
<feature type="glycosylation site" description="N-linked (GlcNAc...) asparagine" evidence="5">
    <location>
        <position position="162"/>
    </location>
</feature>
<feature type="glycosylation site" description="N-linked (GlcNAc...) asparagine" evidence="5">
    <location>
        <position position="182"/>
    </location>
</feature>
<feature type="glycosylation site" description="N-linked (GlcNAc...) asparagine" evidence="5">
    <location>
        <position position="285"/>
    </location>
</feature>
<feature type="glycosylation site" description="N-linked (GlcNAc...) asparagine" evidence="5">
    <location>
        <position position="295"/>
    </location>
</feature>
<feature type="glycosylation site" description="N-linked (GlcNAc...) asparagine" evidence="5">
    <location>
        <position position="341"/>
    </location>
</feature>
<feature type="glycosylation site" description="N-linked (GlcNAc...) asparagine" evidence="5">
    <location>
        <position position="603"/>
    </location>
</feature>
<feature type="glycosylation site" description="N-linked (GlcNAc...) asparagine" evidence="5">
    <location>
        <position position="745"/>
    </location>
</feature>
<feature type="glycosylation site" description="N-linked (GlcNAc...) asparagine" evidence="5">
    <location>
        <position position="998"/>
    </location>
</feature>
<feature type="glycosylation site" description="N-linked (GlcNAc...) asparagine" evidence="5">
    <location>
        <position position="1046"/>
    </location>
</feature>
<feature type="disulfide bond" evidence="4">
    <location>
        <begin position="118"/>
        <end position="128"/>
    </location>
</feature>
<feature type="disulfide bond" evidence="4">
    <location>
        <begin position="146"/>
        <end position="155"/>
    </location>
</feature>
<feature type="disulfide bond" evidence="4">
    <location>
        <begin position="271"/>
        <end position="376"/>
    </location>
</feature>
<feature type="disulfide bond" evidence="4">
    <location>
        <begin position="296"/>
        <end position="338"/>
    </location>
</feature>
<feature type="disulfide bond" evidence="3">
    <location>
        <begin position="619"/>
        <end position="656"/>
    </location>
</feature>
<feature type="disulfide bond" evidence="3">
    <location>
        <begin position="623"/>
        <end position="662"/>
    </location>
</feature>
<feature type="disulfide bond" evidence="3">
    <location>
        <begin position="634"/>
        <end position="646"/>
    </location>
</feature>
<feature type="disulfide bond" evidence="3">
    <location>
        <begin position="683"/>
        <end position="720"/>
    </location>
</feature>
<feature type="disulfide bond" evidence="3">
    <location>
        <begin position="687"/>
        <end position="725"/>
    </location>
</feature>
<feature type="disulfide bond" evidence="3">
    <location>
        <begin position="698"/>
        <end position="710"/>
    </location>
</feature>
<feature type="disulfide bond" evidence="3">
    <location>
        <begin position="862"/>
        <end position="895"/>
    </location>
</feature>
<feature type="disulfide bond" evidence="3">
    <location>
        <begin position="866"/>
        <end position="900"/>
    </location>
</feature>
<feature type="disulfide bond" evidence="3">
    <location>
        <begin position="877"/>
        <end position="885"/>
    </location>
</feature>
<feature type="splice variant" id="VSP_062013" description="In isoform B.">
    <location>
        <begin position="1"/>
        <end position="2"/>
    </location>
</feature>
<feature type="sequence conflict" description="In Ref. 1; AAF04860." evidence="15" ref="1">
    <original>Y</original>
    <variation>H</variation>
    <location>
        <position position="94"/>
    </location>
</feature>
<feature type="sequence conflict" description="In Ref. 1; AAF04860." evidence="15" ref="1">
    <original>R</original>
    <variation>H</variation>
    <location>
        <position position="129"/>
    </location>
</feature>
<feature type="sequence conflict" description="In Ref. 1; AAF04860." evidence="15" ref="1">
    <original>G</original>
    <variation>V</variation>
    <location>
        <position position="300"/>
    </location>
</feature>
<feature type="sequence conflict" description="In Ref. 1; AAF04860." evidence="15" ref="1">
    <location>
        <begin position="356"/>
        <end position="357"/>
    </location>
</feature>
<feature type="sequence conflict" description="In Ref. 1; AAF04860." evidence="15" ref="1">
    <original>H</original>
    <variation>D</variation>
    <location>
        <position position="538"/>
    </location>
</feature>
<feature type="sequence conflict" description="In Ref. 1; AAF04860." evidence="15" ref="1">
    <original>M</original>
    <variation>T</variation>
    <location>
        <position position="751"/>
    </location>
</feature>
<feature type="sequence conflict" description="In Ref. 1; AAF04860." evidence="15" ref="1">
    <original>I</original>
    <variation>M</variation>
    <location>
        <position position="830"/>
    </location>
</feature>
<feature type="sequence conflict" description="In Ref. 1; AAF04860." evidence="15" ref="1">
    <original>L</original>
    <variation>V</variation>
    <location>
        <position position="848"/>
    </location>
</feature>
<feature type="sequence conflict" description="In Ref. 1; AAF04860." evidence="15" ref="1">
    <original>D</original>
    <variation>N</variation>
    <location>
        <position position="902"/>
    </location>
</feature>
<dbReference type="EMBL" id="AF198084">
    <property type="protein sequence ID" value="AAF04860.1"/>
    <property type="status" value="ALT_INIT"/>
    <property type="molecule type" value="mRNA"/>
</dbReference>
<dbReference type="EMBL" id="AE014296">
    <property type="protein sequence ID" value="AAF49966.3"/>
    <property type="molecule type" value="Genomic_DNA"/>
</dbReference>
<dbReference type="EMBL" id="AE014296">
    <property type="protein sequence ID" value="ACZ94701.1"/>
    <property type="molecule type" value="Genomic_DNA"/>
</dbReference>
<dbReference type="EMBL" id="BT009966">
    <property type="protein sequence ID" value="AAQ22435.1"/>
    <property type="molecule type" value="mRNA"/>
</dbReference>
<dbReference type="RefSeq" id="NP_001163430.1">
    <molecule id="Q9VTT0-2"/>
    <property type="nucleotide sequence ID" value="NM_001169959.2"/>
</dbReference>
<dbReference type="RefSeq" id="NP_611293.3">
    <molecule id="Q9VTT0-1"/>
    <property type="nucleotide sequence ID" value="NM_137449.3"/>
</dbReference>
<dbReference type="SMR" id="Q9VTT0"/>
<dbReference type="FunCoup" id="Q9VTT0">
    <property type="interactions" value="275"/>
</dbReference>
<dbReference type="IntAct" id="Q9VTT0">
    <property type="interactions" value="3"/>
</dbReference>
<dbReference type="STRING" id="7227.FBpp0075784"/>
<dbReference type="GlyGen" id="Q9VTT0">
    <property type="glycosylation" value="11 sites"/>
</dbReference>
<dbReference type="PaxDb" id="7227-FBpp0075784"/>
<dbReference type="DNASU" id="37066"/>
<dbReference type="EnsemblMetazoa" id="FBtr0076052">
    <molecule id="Q9VTT0-1"/>
    <property type="protein sequence ID" value="FBpp0075784"/>
    <property type="gene ID" value="FBgn0284221"/>
</dbReference>
<dbReference type="EnsemblMetazoa" id="FBtr0300339">
    <molecule id="Q9VTT0-2"/>
    <property type="protein sequence ID" value="FBpp0289568"/>
    <property type="gene ID" value="FBgn0284221"/>
</dbReference>
<dbReference type="GeneID" id="37066"/>
<dbReference type="KEGG" id="dme:Dmel_CG5661"/>
<dbReference type="UCSC" id="CG5661-RA">
    <molecule id="Q9VTT0-1"/>
    <property type="organism name" value="d. melanogaster"/>
</dbReference>
<dbReference type="AGR" id="FB:FBgn0284221"/>
<dbReference type="CTD" id="37066"/>
<dbReference type="FlyBase" id="FBgn0284221">
    <property type="gene designation" value="Sema5c"/>
</dbReference>
<dbReference type="VEuPathDB" id="VectorBase:FBgn0284221"/>
<dbReference type="eggNOG" id="KOG3611">
    <property type="taxonomic scope" value="Eukaryota"/>
</dbReference>
<dbReference type="HOGENOM" id="CLU_005410_0_0_1"/>
<dbReference type="InParanoid" id="Q9VTT0"/>
<dbReference type="OMA" id="ERYCRND"/>
<dbReference type="OrthoDB" id="9988752at2759"/>
<dbReference type="PhylomeDB" id="Q9VTT0"/>
<dbReference type="Reactome" id="R-DME-416700">
    <property type="pathway name" value="Other semaphorin interactions"/>
</dbReference>
<dbReference type="Reactome" id="R-DME-5173214">
    <property type="pathway name" value="O-glycosylation of TSR domain-containing proteins"/>
</dbReference>
<dbReference type="GenomeRNAi" id="37066"/>
<dbReference type="PRO" id="PR:Q9VTT0"/>
<dbReference type="Proteomes" id="UP000000803">
    <property type="component" value="Chromosome 3L"/>
</dbReference>
<dbReference type="Bgee" id="FBgn0284221">
    <property type="expression patterns" value="Expressed in hemocyte (sensu Nematoda and Protostomia) in body wall and 167 other cell types or tissues"/>
</dbReference>
<dbReference type="ExpressionAtlas" id="Q9VTT0">
    <property type="expression patterns" value="baseline and differential"/>
</dbReference>
<dbReference type="GO" id="GO:0016324">
    <property type="term" value="C:apical plasma membrane"/>
    <property type="evidence" value="ECO:0007669"/>
    <property type="project" value="UniProtKB-SubCell"/>
</dbReference>
<dbReference type="GO" id="GO:0005768">
    <property type="term" value="C:endosome"/>
    <property type="evidence" value="ECO:0007669"/>
    <property type="project" value="UniProtKB-SubCell"/>
</dbReference>
<dbReference type="GO" id="GO:0016328">
    <property type="term" value="C:lateral plasma membrane"/>
    <property type="evidence" value="ECO:0007669"/>
    <property type="project" value="UniProtKB-SubCell"/>
</dbReference>
<dbReference type="GO" id="GO:0005886">
    <property type="term" value="C:plasma membrane"/>
    <property type="evidence" value="ECO:0000318"/>
    <property type="project" value="GO_Central"/>
</dbReference>
<dbReference type="GO" id="GO:0045499">
    <property type="term" value="F:chemorepellent activity"/>
    <property type="evidence" value="ECO:0000318"/>
    <property type="project" value="GO_Central"/>
</dbReference>
<dbReference type="GO" id="GO:0030215">
    <property type="term" value="F:semaphorin receptor binding"/>
    <property type="evidence" value="ECO:0000318"/>
    <property type="project" value="GO_Central"/>
</dbReference>
<dbReference type="GO" id="GO:0007411">
    <property type="term" value="P:axon guidance"/>
    <property type="evidence" value="ECO:0000318"/>
    <property type="project" value="GO_Central"/>
</dbReference>
<dbReference type="GO" id="GO:0048036">
    <property type="term" value="P:central complex development"/>
    <property type="evidence" value="ECO:0000315"/>
    <property type="project" value="FlyBase"/>
</dbReference>
<dbReference type="GO" id="GO:0001700">
    <property type="term" value="P:embryonic development via the syncytial blastoderm"/>
    <property type="evidence" value="ECO:0000270"/>
    <property type="project" value="FlyBase"/>
</dbReference>
<dbReference type="GO" id="GO:0042048">
    <property type="term" value="P:olfactory behavior"/>
    <property type="evidence" value="ECO:0000315"/>
    <property type="project" value="FlyBase"/>
</dbReference>
<dbReference type="GO" id="GO:0030335">
    <property type="term" value="P:positive regulation of cell migration"/>
    <property type="evidence" value="ECO:0000318"/>
    <property type="project" value="GO_Central"/>
</dbReference>
<dbReference type="GO" id="GO:0071526">
    <property type="term" value="P:semaphorin-plexin signaling pathway"/>
    <property type="evidence" value="ECO:0000318"/>
    <property type="project" value="GO_Central"/>
</dbReference>
<dbReference type="CDD" id="cd11265">
    <property type="entry name" value="Sema_5C"/>
    <property type="match status" value="1"/>
</dbReference>
<dbReference type="FunFam" id="2.130.10.10:FF:001151">
    <property type="entry name" value="Semaphorin 5C"/>
    <property type="match status" value="1"/>
</dbReference>
<dbReference type="FunFam" id="2.20.100.10:FF:000162">
    <property type="entry name" value="Semaphorin 5C"/>
    <property type="match status" value="1"/>
</dbReference>
<dbReference type="FunFam" id="2.20.100.10:FF:000001">
    <property type="entry name" value="semaphorin-5A isoform X1"/>
    <property type="match status" value="2"/>
</dbReference>
<dbReference type="FunFam" id="2.20.100.10:FF:000021">
    <property type="entry name" value="semaphorin-5B isoform X1"/>
    <property type="match status" value="1"/>
</dbReference>
<dbReference type="Gene3D" id="3.30.1680.10">
    <property type="entry name" value="ligand-binding face of the semaphorins, domain 2"/>
    <property type="match status" value="1"/>
</dbReference>
<dbReference type="Gene3D" id="2.20.100.10">
    <property type="entry name" value="Thrombospondin type-1 (TSP1) repeat"/>
    <property type="match status" value="6"/>
</dbReference>
<dbReference type="Gene3D" id="2.130.10.10">
    <property type="entry name" value="YVTN repeat-like/Quinoprotein amine dehydrogenase"/>
    <property type="match status" value="1"/>
</dbReference>
<dbReference type="InterPro" id="IPR002165">
    <property type="entry name" value="Plexin_repeat"/>
</dbReference>
<dbReference type="InterPro" id="IPR016201">
    <property type="entry name" value="PSI"/>
</dbReference>
<dbReference type="InterPro" id="IPR048224">
    <property type="entry name" value="Sema5C_Sema"/>
</dbReference>
<dbReference type="InterPro" id="IPR001627">
    <property type="entry name" value="Semap_dom"/>
</dbReference>
<dbReference type="InterPro" id="IPR036352">
    <property type="entry name" value="Semap_dom_sf"/>
</dbReference>
<dbReference type="InterPro" id="IPR027231">
    <property type="entry name" value="Semaphorin"/>
</dbReference>
<dbReference type="InterPro" id="IPR000884">
    <property type="entry name" value="TSP1_rpt"/>
</dbReference>
<dbReference type="InterPro" id="IPR036383">
    <property type="entry name" value="TSP1_rpt_sf"/>
</dbReference>
<dbReference type="InterPro" id="IPR015943">
    <property type="entry name" value="WD40/YVTN_repeat-like_dom_sf"/>
</dbReference>
<dbReference type="PANTHER" id="PTHR11036">
    <property type="entry name" value="SEMAPHORIN"/>
    <property type="match status" value="1"/>
</dbReference>
<dbReference type="PANTHER" id="PTHR11036:SF79">
    <property type="entry name" value="SEMAPHORIN 5C, ISOFORM A"/>
    <property type="match status" value="1"/>
</dbReference>
<dbReference type="Pfam" id="PF01437">
    <property type="entry name" value="PSI"/>
    <property type="match status" value="1"/>
</dbReference>
<dbReference type="Pfam" id="PF01403">
    <property type="entry name" value="Sema"/>
    <property type="match status" value="1"/>
</dbReference>
<dbReference type="Pfam" id="PF23260">
    <property type="entry name" value="TSP1_2"/>
    <property type="match status" value="1"/>
</dbReference>
<dbReference type="Pfam" id="PF00090">
    <property type="entry name" value="TSP_1"/>
    <property type="match status" value="5"/>
</dbReference>
<dbReference type="PRINTS" id="PR01705">
    <property type="entry name" value="TSP1REPEAT"/>
</dbReference>
<dbReference type="SMART" id="SM00423">
    <property type="entry name" value="PSI"/>
    <property type="match status" value="1"/>
</dbReference>
<dbReference type="SMART" id="SM00630">
    <property type="entry name" value="Sema"/>
    <property type="match status" value="1"/>
</dbReference>
<dbReference type="SMART" id="SM00209">
    <property type="entry name" value="TSP1"/>
    <property type="match status" value="6"/>
</dbReference>
<dbReference type="SUPFAM" id="SSF103575">
    <property type="entry name" value="Plexin repeat"/>
    <property type="match status" value="1"/>
</dbReference>
<dbReference type="SUPFAM" id="SSF101912">
    <property type="entry name" value="Sema domain"/>
    <property type="match status" value="1"/>
</dbReference>
<dbReference type="SUPFAM" id="SSF82895">
    <property type="entry name" value="TSP-1 type 1 repeat"/>
    <property type="match status" value="6"/>
</dbReference>
<dbReference type="PROSITE" id="PS51004">
    <property type="entry name" value="SEMA"/>
    <property type="match status" value="1"/>
</dbReference>
<dbReference type="PROSITE" id="PS50092">
    <property type="entry name" value="TSP1"/>
    <property type="match status" value="6"/>
</dbReference>
<reference evidence="16" key="1">
    <citation type="journal article" date="2000" name="Mech. Dev.">
        <title>Expression patterns of two new members of the Semaphorin family in Drosophila suggest early functions during embryogenesis.</title>
        <authorList>
            <person name="Khare N."/>
            <person name="Fascetti N."/>
            <person name="DaRocha S."/>
            <person name="Chiquet-Ehrismann R."/>
            <person name="Baumgartner S."/>
        </authorList>
    </citation>
    <scope>NUCLEOTIDE SEQUENCE [MRNA]</scope>
    <scope>DEVELOPMENTAL STAGE</scope>
    <source>
        <strain evidence="16">Oregon-R</strain>
    </source>
</reference>
<reference evidence="20" key="2">
    <citation type="journal article" date="2000" name="Science">
        <title>The genome sequence of Drosophila melanogaster.</title>
        <authorList>
            <person name="Adams M.D."/>
            <person name="Celniker S.E."/>
            <person name="Holt R.A."/>
            <person name="Evans C.A."/>
            <person name="Gocayne J.D."/>
            <person name="Amanatides P.G."/>
            <person name="Scherer S.E."/>
            <person name="Li P.W."/>
            <person name="Hoskins R.A."/>
            <person name="Galle R.F."/>
            <person name="George R.A."/>
            <person name="Lewis S.E."/>
            <person name="Richards S."/>
            <person name="Ashburner M."/>
            <person name="Henderson S.N."/>
            <person name="Sutton G.G."/>
            <person name="Wortman J.R."/>
            <person name="Yandell M.D."/>
            <person name="Zhang Q."/>
            <person name="Chen L.X."/>
            <person name="Brandon R.C."/>
            <person name="Rogers Y.-H.C."/>
            <person name="Blazej R.G."/>
            <person name="Champe M."/>
            <person name="Pfeiffer B.D."/>
            <person name="Wan K.H."/>
            <person name="Doyle C."/>
            <person name="Baxter E.G."/>
            <person name="Helt G."/>
            <person name="Nelson C.R."/>
            <person name="Miklos G.L.G."/>
            <person name="Abril J.F."/>
            <person name="Agbayani A."/>
            <person name="An H.-J."/>
            <person name="Andrews-Pfannkoch C."/>
            <person name="Baldwin D."/>
            <person name="Ballew R.M."/>
            <person name="Basu A."/>
            <person name="Baxendale J."/>
            <person name="Bayraktaroglu L."/>
            <person name="Beasley E.M."/>
            <person name="Beeson K.Y."/>
            <person name="Benos P.V."/>
            <person name="Berman B.P."/>
            <person name="Bhandari D."/>
            <person name="Bolshakov S."/>
            <person name="Borkova D."/>
            <person name="Botchan M.R."/>
            <person name="Bouck J."/>
            <person name="Brokstein P."/>
            <person name="Brottier P."/>
            <person name="Burtis K.C."/>
            <person name="Busam D.A."/>
            <person name="Butler H."/>
            <person name="Cadieu E."/>
            <person name="Center A."/>
            <person name="Chandra I."/>
            <person name="Cherry J.M."/>
            <person name="Cawley S."/>
            <person name="Dahlke C."/>
            <person name="Davenport L.B."/>
            <person name="Davies P."/>
            <person name="de Pablos B."/>
            <person name="Delcher A."/>
            <person name="Deng Z."/>
            <person name="Mays A.D."/>
            <person name="Dew I."/>
            <person name="Dietz S.M."/>
            <person name="Dodson K."/>
            <person name="Doup L.E."/>
            <person name="Downes M."/>
            <person name="Dugan-Rocha S."/>
            <person name="Dunkov B.C."/>
            <person name="Dunn P."/>
            <person name="Durbin K.J."/>
            <person name="Evangelista C.C."/>
            <person name="Ferraz C."/>
            <person name="Ferriera S."/>
            <person name="Fleischmann W."/>
            <person name="Fosler C."/>
            <person name="Gabrielian A.E."/>
            <person name="Garg N.S."/>
            <person name="Gelbart W.M."/>
            <person name="Glasser K."/>
            <person name="Glodek A."/>
            <person name="Gong F."/>
            <person name="Gorrell J.H."/>
            <person name="Gu Z."/>
            <person name="Guan P."/>
            <person name="Harris M."/>
            <person name="Harris N.L."/>
            <person name="Harvey D.A."/>
            <person name="Heiman T.J."/>
            <person name="Hernandez J.R."/>
            <person name="Houck J."/>
            <person name="Hostin D."/>
            <person name="Houston K.A."/>
            <person name="Howland T.J."/>
            <person name="Wei M.-H."/>
            <person name="Ibegwam C."/>
            <person name="Jalali M."/>
            <person name="Kalush F."/>
            <person name="Karpen G.H."/>
            <person name="Ke Z."/>
            <person name="Kennison J.A."/>
            <person name="Ketchum K.A."/>
            <person name="Kimmel B.E."/>
            <person name="Kodira C.D."/>
            <person name="Kraft C.L."/>
            <person name="Kravitz S."/>
            <person name="Kulp D."/>
            <person name="Lai Z."/>
            <person name="Lasko P."/>
            <person name="Lei Y."/>
            <person name="Levitsky A.A."/>
            <person name="Li J.H."/>
            <person name="Li Z."/>
            <person name="Liang Y."/>
            <person name="Lin X."/>
            <person name="Liu X."/>
            <person name="Mattei B."/>
            <person name="McIntosh T.C."/>
            <person name="McLeod M.P."/>
            <person name="McPherson D."/>
            <person name="Merkulov G."/>
            <person name="Milshina N.V."/>
            <person name="Mobarry C."/>
            <person name="Morris J."/>
            <person name="Moshrefi A."/>
            <person name="Mount S.M."/>
            <person name="Moy M."/>
            <person name="Murphy B."/>
            <person name="Murphy L."/>
            <person name="Muzny D.M."/>
            <person name="Nelson D.L."/>
            <person name="Nelson D.R."/>
            <person name="Nelson K.A."/>
            <person name="Nixon K."/>
            <person name="Nusskern D.R."/>
            <person name="Pacleb J.M."/>
            <person name="Palazzolo M."/>
            <person name="Pittman G.S."/>
            <person name="Pan S."/>
            <person name="Pollard J."/>
            <person name="Puri V."/>
            <person name="Reese M.G."/>
            <person name="Reinert K."/>
            <person name="Remington K."/>
            <person name="Saunders R.D.C."/>
            <person name="Scheeler F."/>
            <person name="Shen H."/>
            <person name="Shue B.C."/>
            <person name="Siden-Kiamos I."/>
            <person name="Simpson M."/>
            <person name="Skupski M.P."/>
            <person name="Smith T.J."/>
            <person name="Spier E."/>
            <person name="Spradling A.C."/>
            <person name="Stapleton M."/>
            <person name="Strong R."/>
            <person name="Sun E."/>
            <person name="Svirskas R."/>
            <person name="Tector C."/>
            <person name="Turner R."/>
            <person name="Venter E."/>
            <person name="Wang A.H."/>
            <person name="Wang X."/>
            <person name="Wang Z.-Y."/>
            <person name="Wassarman D.A."/>
            <person name="Weinstock G.M."/>
            <person name="Weissenbach J."/>
            <person name="Williams S.M."/>
            <person name="Woodage T."/>
            <person name="Worley K.C."/>
            <person name="Wu D."/>
            <person name="Yang S."/>
            <person name="Yao Q.A."/>
            <person name="Ye J."/>
            <person name="Yeh R.-F."/>
            <person name="Zaveri J.S."/>
            <person name="Zhan M."/>
            <person name="Zhang G."/>
            <person name="Zhao Q."/>
            <person name="Zheng L."/>
            <person name="Zheng X.H."/>
            <person name="Zhong F.N."/>
            <person name="Zhong W."/>
            <person name="Zhou X."/>
            <person name="Zhu S.C."/>
            <person name="Zhu X."/>
            <person name="Smith H.O."/>
            <person name="Gibbs R.A."/>
            <person name="Myers E.W."/>
            <person name="Rubin G.M."/>
            <person name="Venter J.C."/>
        </authorList>
    </citation>
    <scope>NUCLEOTIDE SEQUENCE [LARGE SCALE GENOMIC DNA]</scope>
    <source>
        <strain>Berkeley</strain>
    </source>
</reference>
<reference evidence="20" key="3">
    <citation type="journal article" date="2002" name="Genome Biol.">
        <title>Annotation of the Drosophila melanogaster euchromatic genome: a systematic review.</title>
        <authorList>
            <person name="Misra S."/>
            <person name="Crosby M.A."/>
            <person name="Mungall C.J."/>
            <person name="Matthews B.B."/>
            <person name="Campbell K.S."/>
            <person name="Hradecky P."/>
            <person name="Huang Y."/>
            <person name="Kaminker J.S."/>
            <person name="Millburn G.H."/>
            <person name="Prochnik S.E."/>
            <person name="Smith C.D."/>
            <person name="Tupy J.L."/>
            <person name="Whitfield E.J."/>
            <person name="Bayraktaroglu L."/>
            <person name="Berman B.P."/>
            <person name="Bettencourt B.R."/>
            <person name="Celniker S.E."/>
            <person name="de Grey A.D.N.J."/>
            <person name="Drysdale R.A."/>
            <person name="Harris N.L."/>
            <person name="Richter J."/>
            <person name="Russo S."/>
            <person name="Schroeder A.J."/>
            <person name="Shu S.Q."/>
            <person name="Stapleton M."/>
            <person name="Yamada C."/>
            <person name="Ashburner M."/>
            <person name="Gelbart W.M."/>
            <person name="Rubin G.M."/>
            <person name="Lewis S.E."/>
        </authorList>
    </citation>
    <scope>GENOME REANNOTATION</scope>
    <source>
        <strain evidence="20">Berkeley</strain>
    </source>
</reference>
<reference evidence="18" key="4">
    <citation type="submission" date="2003-08" db="EMBL/GenBank/DDBJ databases">
        <authorList>
            <person name="Stapleton M."/>
            <person name="Brokstein P."/>
            <person name="Hong L."/>
            <person name="Agbayani A."/>
            <person name="Carlson J."/>
            <person name="Champe M."/>
            <person name="Chavez C."/>
            <person name="Dorsett V."/>
            <person name="Dresnek D."/>
            <person name="Farfan D."/>
            <person name="Frise E."/>
            <person name="George R."/>
            <person name="Gonzalez M."/>
            <person name="Guarin H."/>
            <person name="Kronmiller B."/>
            <person name="Li P."/>
            <person name="Liao G."/>
            <person name="Miranda A."/>
            <person name="Mungall C.J."/>
            <person name="Nunoo J."/>
            <person name="Pacleb J."/>
            <person name="Paragas V."/>
            <person name="Park S."/>
            <person name="Patel S."/>
            <person name="Phouanenavong S."/>
            <person name="Wan K."/>
            <person name="Yu C."/>
            <person name="Lewis S.E."/>
            <person name="Rubin G.M."/>
            <person name="Celniker S."/>
        </authorList>
    </citation>
    <scope>NUCLEOTIDE SEQUENCE [LARGE SCALE MRNA] (ISOFORM B)</scope>
    <source>
        <strain evidence="18">Berkeley</strain>
        <tissue evidence="18">Embryo</tissue>
    </source>
</reference>
<reference evidence="15" key="5">
    <citation type="journal article" date="2001" name="Dev. Dyn.">
        <title>Characterization and mutant analysis of the Drosophila sema 5c gene.</title>
        <authorList>
            <person name="Bahri S.M."/>
            <person name="Chia W."/>
            <person name="Yang X."/>
        </authorList>
    </citation>
    <scope>DEVELOPMENTAL STAGE</scope>
    <scope>DISRUPTION PHENOTYPE</scope>
</reference>
<reference evidence="15" key="6">
    <citation type="journal article" date="2007" name="Genetics">
        <title>The early developmental gene Semaphorin 5c contributes to olfactory behavior in adult Drosophila.</title>
        <authorList>
            <person name="Rollmann S.M."/>
            <person name="Yamamoto A."/>
            <person name="Goossens T."/>
            <person name="Zwarts L."/>
            <person name="Callaerts-Vegh Z."/>
            <person name="Callaerts P."/>
            <person name="Norga K."/>
            <person name="Mackay T.F."/>
            <person name="Anholt R.R."/>
        </authorList>
    </citation>
    <scope>FUNCTION</scope>
    <scope>DEVELOPMENTAL STAGE</scope>
    <scope>DISRUPTION PHENOTYPE</scope>
</reference>
<reference evidence="15" key="7">
    <citation type="journal article" date="2019" name="Curr. Biol.">
        <title>Planar-Polarized Semaphorin-5c and Plexin A Promote the Collective Migration of Epithelial Cells in Drosophila.</title>
        <authorList>
            <person name="Stedden C.G."/>
            <person name="Menegas W."/>
            <person name="Zajac A.L."/>
            <person name="Williams A.M."/>
            <person name="Cheng S."/>
            <person name="Oezkan E."/>
            <person name="Horne-Badovinac S."/>
        </authorList>
    </citation>
    <scope>FUNCTION</scope>
    <scope>SUBCELLULAR LOCATION</scope>
    <scope>TISSUE SPECIFICITY</scope>
</reference>
<reference evidence="15" key="8">
    <citation type="journal article" date="2023" name="Sci. Rep.">
        <title>Adult expression of Semaphorins and Plexins is essential for motor neuron survival.</title>
        <authorList>
            <person name="Vaikakkara Chithran A."/>
            <person name="Allan D.W."/>
            <person name="O'Connor T.P."/>
        </authorList>
    </citation>
    <scope>FUNCTION</scope>
    <scope>DISRUPTION PHENOTYPE</scope>
</reference>
<keyword id="KW-0025">Alternative splicing</keyword>
<keyword id="KW-1003">Cell membrane</keyword>
<keyword id="KW-0221">Differentiation</keyword>
<keyword id="KW-1015">Disulfide bond</keyword>
<keyword id="KW-0967">Endosome</keyword>
<keyword id="KW-0325">Glycoprotein</keyword>
<keyword id="KW-0472">Membrane</keyword>
<keyword id="KW-0524">Neurogenesis</keyword>
<keyword id="KW-1185">Reference proteome</keyword>
<keyword id="KW-0677">Repeat</keyword>
<keyword id="KW-0732">Signal</keyword>
<keyword id="KW-0812">Transmembrane</keyword>
<keyword id="KW-1133">Transmembrane helix</keyword>
<sequence length="1093" mass="121928">MNMLILKLPKMFSQLWLLLILSLLTLEGPQPSTGSGYTTKSSVDLLENDSRYISYQDLMSTAKRFYDPETTWYSEMLFDVARNQVIVGARDTLYRMSFDLEPLERASWGATPSEIAMCQAKGQSERWCRNYVRVLHSYGENQLYACGTNAFQPSCSWRQMENLTVTGVDSGVVKCPFHPQANSTSLLQSNGQLFVGTATDFSGSDVAILRTGVESNKRFLRTKQYNNNWLSGAQFVGSFEAGHFVYFLLRESAAEHMSCGKVIYSRVARVCKNDVGGGGQLLRDNWTSFLKARLNCSLPGEYPYYFDEIQGMTYAESESILYATFRTSGSSIFGSAVCAYNLSSINAAFDGPFKQQEHSDAAWKTVNTNQRSQFQCGTSSIGHWLESSRYQLMDEAVQPIGAEPLYHSKLEQFGRLALDIINTKTEQVHVLFVASSGNHIKKLSVKYDGDGVQTCLVELWQADDTGTSSLLNMAYLKVSDSLYLGTDLALTRIPAQHCSRHVSQSSCLNSMDPYCGWNELVERCMPQPQDSSVLQHWHQAPQITCPVLNAPIDGGWSTWSPWAVCQQHEQPDSNCQCRQRSCNNPQPQHGGATCEGISTQVTNCTQHGGWTEWSAWSPCSQTCGIAVKIRRRTCGNPRPAFGGRTCVGSEQSEMYCRHLPPCPVAKPQSVDGGWGPWGEWSECSAQCGGGFRMRRRECNDPAPLNGGMECPGCRLDYEECNMQSCQEVRKLSAWTPWLTVTGSGNSSEPHMERRFRFVCRATSPDPSSVRIGLPKEESRNCHADGSCQRQVDHDSADSDAADWSPCSVSCGGGVQQRHRGRGSQSRVCNIHACPAEEQLSSNSLDNELEHGEWGCWSEWSACSVTCGLGLRRRTRRCLAGHDRLCQGRALEEQKCEMVPCEDFLGWSAWSEWSSCSSDGIRLRHRRCLVEQPGSMECRGAEFEKTACVPNECEETQTASTATLPIVIFVGLLFTVACCLATYRFTKKRFMLSAEEALNKTTTTTASFDTYPNQYSSLPTKDYYDQRPKRQSSFRMPAKTSNLGNGNGTLNRNNMHQNNTPKVLAKTYIDCESGTIKRQSALNNCRSNIDDEKF</sequence>
<evidence type="ECO:0000250" key="1">
    <source>
        <dbReference type="UniProtKB" id="Q60519"/>
    </source>
</evidence>
<evidence type="ECO:0000255" key="2"/>
<evidence type="ECO:0000255" key="3">
    <source>
        <dbReference type="PROSITE-ProRule" id="PRU00210"/>
    </source>
</evidence>
<evidence type="ECO:0000255" key="4">
    <source>
        <dbReference type="PROSITE-ProRule" id="PRU00352"/>
    </source>
</evidence>
<evidence type="ECO:0000255" key="5">
    <source>
        <dbReference type="PROSITE-ProRule" id="PRU00498"/>
    </source>
</evidence>
<evidence type="ECO:0000256" key="6">
    <source>
        <dbReference type="SAM" id="MobiDB-lite"/>
    </source>
</evidence>
<evidence type="ECO:0000269" key="7">
    <source>
    </source>
</evidence>
<evidence type="ECO:0000269" key="8">
    <source>
    </source>
</evidence>
<evidence type="ECO:0000269" key="9">
    <source>
    </source>
</evidence>
<evidence type="ECO:0000269" key="10">
    <source>
    </source>
</evidence>
<evidence type="ECO:0000269" key="11">
    <source>
    </source>
</evidence>
<evidence type="ECO:0000303" key="12">
    <source>
    </source>
</evidence>
<evidence type="ECO:0000303" key="13">
    <source>
    </source>
</evidence>
<evidence type="ECO:0000303" key="14">
    <source>
    </source>
</evidence>
<evidence type="ECO:0000305" key="15"/>
<evidence type="ECO:0000312" key="16">
    <source>
        <dbReference type="EMBL" id="AAF04860.1"/>
    </source>
</evidence>
<evidence type="ECO:0000312" key="17">
    <source>
        <dbReference type="EMBL" id="AAF49966.3"/>
    </source>
</evidence>
<evidence type="ECO:0000312" key="18">
    <source>
        <dbReference type="EMBL" id="AAQ22435.1"/>
    </source>
</evidence>
<evidence type="ECO:0000312" key="19">
    <source>
        <dbReference type="FlyBase" id="FBgn0284221"/>
    </source>
</evidence>
<evidence type="ECO:0000312" key="20">
    <source>
        <dbReference type="Proteomes" id="UP000000803"/>
    </source>
</evidence>
<proteinExistence type="evidence at protein level"/>